<proteinExistence type="inferred from homology"/>
<sequence>MTQTLSLRAVLCATTLVSPFLAQAATESEVEALKKELLELRQRYEAQQNALMVLEQRVRQVEAQPQAPQPQRLVKSIQPPAQARNDANAVAGTYGASLKDDGAPAPSVENIYQDASGFFGGGTFSLETGLTYSHYDTRQLFLNGFLALDSIFLGNIGVDQIDADIWTLDLTGRYNWNQRWQVDINAPVVYRESTYQSAGAGGSTSQITEKSVTGDPRLGDVSFGVAYKFLDESESTPDAVVSLRVKAPTGKDPYGIKLKQVPGNNNLNVPDDLPTGNGVWSITPGISLVKTVDPAVLFGSLSYTYNFEESFDDINPQQGVKTGGKVKLGNWFQLGVGVAFALNEKMSMSFSFSELISQKSKVKQDGQSWQTVSGSDANAGYFGLGMTYAVSNRFSIVPSLSIGITPDAPDFTFGVKFPYYF</sequence>
<organism>
    <name type="scientific">Pseudomonas aeruginosa (strain ATCC 15692 / DSM 22644 / CIP 104116 / JCM 14847 / LMG 12228 / 1C / PRS 101 / PAO1)</name>
    <dbReference type="NCBI Taxonomy" id="208964"/>
    <lineage>
        <taxon>Bacteria</taxon>
        <taxon>Pseudomonadati</taxon>
        <taxon>Pseudomonadota</taxon>
        <taxon>Gammaproteobacteria</taxon>
        <taxon>Pseudomonadales</taxon>
        <taxon>Pseudomonadaceae</taxon>
        <taxon>Pseudomonas</taxon>
    </lineage>
</organism>
<accession>Q9I2F3</accession>
<keyword id="KW-0998">Cell outer membrane</keyword>
<keyword id="KW-0175">Coiled coil</keyword>
<keyword id="KW-0472">Membrane</keyword>
<keyword id="KW-0653">Protein transport</keyword>
<keyword id="KW-1185">Reference proteome</keyword>
<keyword id="KW-0964">Secreted</keyword>
<keyword id="KW-0732">Signal</keyword>
<keyword id="KW-0813">Transport</keyword>
<gene>
    <name evidence="5" type="primary">fapF</name>
    <name evidence="4" type="ordered locus">PA1951</name>
</gene>
<comment type="function">
    <text evidence="3 7">Transports fibril components across the outer membrane (Probable) (PubMed:23504942). Upon overexpression of the endogenous six-gene locus (fapA-fapF), cells form large clumps during liquid growth, make large amounts of biofilm and produce amyloid fibrils (PubMed:23504942).</text>
</comment>
<comment type="subcellular location">
    <subcellularLocation>
        <location evidence="2">Secreted</location>
    </subcellularLocation>
    <subcellularLocation>
        <location evidence="2">Cell surface</location>
    </subcellularLocation>
    <subcellularLocation>
        <location evidence="7">Cell outer membrane</location>
    </subcellularLocation>
</comment>
<comment type="disruption phenotype">
    <text evidence="3">Deletion of the entire fapA-fapF six-gene locus shows no visible growth phenotype.</text>
</comment>
<comment type="similarity">
    <text evidence="6">Belongs to the amyloid transporter (TC 9.B.153) family.</text>
</comment>
<feature type="signal peptide" evidence="1">
    <location>
        <begin position="1"/>
        <end position="24"/>
    </location>
</feature>
<feature type="chain" id="PRO_5004328447" description="Functional amyloid transporter FapF" evidence="1">
    <location>
        <begin position="25"/>
        <end position="421"/>
    </location>
</feature>
<feature type="coiled-coil region" evidence="1">
    <location>
        <begin position="23"/>
        <end position="64"/>
    </location>
</feature>
<protein>
    <recommendedName>
        <fullName evidence="5">Functional amyloid transporter FapF</fullName>
    </recommendedName>
</protein>
<evidence type="ECO:0000255" key="1"/>
<evidence type="ECO:0000269" key="2">
    <source>
    </source>
</evidence>
<evidence type="ECO:0000269" key="3">
    <source>
    </source>
</evidence>
<evidence type="ECO:0000303" key="4">
    <source>
    </source>
</evidence>
<evidence type="ECO:0000303" key="5">
    <source>
    </source>
</evidence>
<evidence type="ECO:0000305" key="6"/>
<evidence type="ECO:0000305" key="7">
    <source>
    </source>
</evidence>
<evidence type="ECO:0000312" key="8">
    <source>
        <dbReference type="EMBL" id="AAG05339.1"/>
    </source>
</evidence>
<dbReference type="EMBL" id="AE004091">
    <property type="protein sequence ID" value="AAG05339.1"/>
    <property type="molecule type" value="Genomic_DNA"/>
</dbReference>
<dbReference type="PIR" id="F83400">
    <property type="entry name" value="F83400"/>
</dbReference>
<dbReference type="RefSeq" id="NP_250641.1">
    <property type="nucleotide sequence ID" value="NC_002516.2"/>
</dbReference>
<dbReference type="RefSeq" id="WP_003088309.1">
    <property type="nucleotide sequence ID" value="NZ_QZGE01000030.1"/>
</dbReference>
<dbReference type="SMR" id="Q9I2F3"/>
<dbReference type="STRING" id="208964.PA1951"/>
<dbReference type="PaxDb" id="208964-PA1951"/>
<dbReference type="GeneID" id="880745"/>
<dbReference type="KEGG" id="pae:PA1951"/>
<dbReference type="PATRIC" id="fig|208964.12.peg.2033"/>
<dbReference type="PseudoCAP" id="PA1951"/>
<dbReference type="HOGENOM" id="CLU_041778_1_0_6"/>
<dbReference type="InParanoid" id="Q9I2F3"/>
<dbReference type="OrthoDB" id="5297564at2"/>
<dbReference type="PhylomeDB" id="Q9I2F3"/>
<dbReference type="BioCyc" id="PAER208964:G1FZ6-1989-MONOMER"/>
<dbReference type="Proteomes" id="UP000002438">
    <property type="component" value="Chromosome"/>
</dbReference>
<dbReference type="GO" id="GO:0009279">
    <property type="term" value="C:cell outer membrane"/>
    <property type="evidence" value="ECO:0007669"/>
    <property type="project" value="UniProtKB-SubCell"/>
</dbReference>
<dbReference type="GO" id="GO:0009986">
    <property type="term" value="C:cell surface"/>
    <property type="evidence" value="ECO:0007669"/>
    <property type="project" value="UniProtKB-SubCell"/>
</dbReference>
<dbReference type="GO" id="GO:0005576">
    <property type="term" value="C:extracellular region"/>
    <property type="evidence" value="ECO:0007669"/>
    <property type="project" value="UniProtKB-SubCell"/>
</dbReference>
<dbReference type="GO" id="GO:1990000">
    <property type="term" value="P:amyloid fibril formation"/>
    <property type="evidence" value="ECO:0000315"/>
    <property type="project" value="PseudoCAP"/>
</dbReference>
<dbReference type="GO" id="GO:0015031">
    <property type="term" value="P:protein transport"/>
    <property type="evidence" value="ECO:0007669"/>
    <property type="project" value="UniProtKB-KW"/>
</dbReference>
<dbReference type="InterPro" id="IPR025737">
    <property type="entry name" value="FApF"/>
</dbReference>
<dbReference type="Pfam" id="PF13557">
    <property type="entry name" value="Phenol_MetA_deg"/>
    <property type="match status" value="1"/>
</dbReference>
<name>FAPF_PSEAE</name>
<reference evidence="8" key="1">
    <citation type="journal article" date="2000" name="Nature">
        <title>Complete genome sequence of Pseudomonas aeruginosa PAO1, an opportunistic pathogen.</title>
        <authorList>
            <person name="Stover C.K."/>
            <person name="Pham X.-Q.T."/>
            <person name="Erwin A.L."/>
            <person name="Mizoguchi S.D."/>
            <person name="Warrener P."/>
            <person name="Hickey M.J."/>
            <person name="Brinkman F.S.L."/>
            <person name="Hufnagle W.O."/>
            <person name="Kowalik D.J."/>
            <person name="Lagrou M."/>
            <person name="Garber R.L."/>
            <person name="Goltry L."/>
            <person name="Tolentino E."/>
            <person name="Westbrock-Wadman S."/>
            <person name="Yuan Y."/>
            <person name="Brody L.L."/>
            <person name="Coulter S.N."/>
            <person name="Folger K.R."/>
            <person name="Kas A."/>
            <person name="Larbig K."/>
            <person name="Lim R.M."/>
            <person name="Smith K.A."/>
            <person name="Spencer D.H."/>
            <person name="Wong G.K.-S."/>
            <person name="Wu Z."/>
            <person name="Paulsen I.T."/>
            <person name="Reizer J."/>
            <person name="Saier M.H. Jr."/>
            <person name="Hancock R.E.W."/>
            <person name="Lory S."/>
            <person name="Olson M.V."/>
        </authorList>
    </citation>
    <scope>NUCLEOTIDE SEQUENCE [LARGE SCALE GENOMIC DNA]</scope>
    <source>
        <strain>ATCC 15692 / DSM 22644 / CIP 104116 / JCM 14847 / LMG 12228 / 1C / PRS 101 / PAO1</strain>
    </source>
</reference>
<reference key="2">
    <citation type="journal article" date="2005" name="Genome Res.">
        <title>Genome-wide identification of Pseudomonas aeruginosa exported proteins using a consensus computational strategy combined with a laboratory-based PhoA fusion screen.</title>
        <authorList>
            <person name="Lewenza S."/>
            <person name="Gardy J.L."/>
            <person name="Brinkman F.S."/>
            <person name="Hancock R.E."/>
        </authorList>
    </citation>
    <scope>SUBCELLULAR LOCATION</scope>
    <source>
        <strain>ATCC 15692 / DSM 22644 / CIP 104116 / JCM 14847 / LMG 12228 / 1C / PRS 101 / PAO1</strain>
    </source>
</reference>
<reference key="3">
    <citation type="journal article" date="2013" name="MicrobiologyOpen">
        <title>Expression of Fap amyloids in Pseudomonas aeruginosa, P. fluorescens, and P. putida results in aggregation and increased biofilm formation.</title>
        <authorList>
            <person name="Dueholm M.S."/>
            <person name="Soendergaard M.T."/>
            <person name="Nilsson M."/>
            <person name="Christiansen G."/>
            <person name="Stensballe A."/>
            <person name="Overgaard M.T."/>
            <person name="Givskov M."/>
            <person name="Tolker-Nielsen T."/>
            <person name="Otzen D.E."/>
            <person name="Nielsen P.H."/>
        </authorList>
    </citation>
    <scope>FUNCTION</scope>
    <scope>POSSIBLE SUBCELLULAR LOCATION</scope>
    <scope>DISRUPTION PHENOTYPE</scope>
    <source>
        <strain>ATCC 15692 / DSM 22644 / CIP 104116 / JCM 14847 / LMG 12228 / 1C / PRS 101 / PAO1</strain>
    </source>
</reference>